<gene>
    <name type="primary">RAMDAZC7</name>
</gene>
<reference key="1">
    <citation type="journal article" date="1992" name="Eur. J. Biochem.">
        <title>Corn kernel cysteine proteinase inhibitor as a novel cystatin superfamily member of plant origin. Molecular cloning and expression studies.</title>
        <authorList>
            <person name="Abe M."/>
            <person name="Abe K."/>
            <person name="Kuroda M."/>
            <person name="Arai S."/>
        </authorList>
    </citation>
    <scope>NUCLEOTIDE SEQUENCE [MRNA]</scope>
    <source>
        <strain>cv. Koshu</strain>
        <tissue>Immature kernel</tissue>
    </source>
</reference>
<reference key="2">
    <citation type="journal article" date="1993" name="Plant Physiol.">
        <title>Partial sequence analysis of 130 randomly selected maize cDNA clones.</title>
        <authorList>
            <person name="Keith C.S."/>
            <person name="Hoang D.O."/>
            <person name="Barrett B.M."/>
            <person name="Feigelman B."/>
            <person name="Nelson M.C."/>
            <person name="Thai H."/>
            <person name="Baysdorfer C."/>
        </authorList>
    </citation>
    <scope>NUCLEOTIDE SEQUENCE [MRNA] OF 84-135</scope>
    <source>
        <strain>cv. B73</strain>
    </source>
</reference>
<comment type="developmental stage">
    <text>Reaches a maximum 2 weeks after flowering and then decreases gradually.</text>
</comment>
<comment type="similarity">
    <text evidence="3">Belongs to the cystatin family. Phytocystatin subfamily.</text>
</comment>
<organism>
    <name type="scientific">Zea mays</name>
    <name type="common">Maize</name>
    <dbReference type="NCBI Taxonomy" id="4577"/>
    <lineage>
        <taxon>Eukaryota</taxon>
        <taxon>Viridiplantae</taxon>
        <taxon>Streptophyta</taxon>
        <taxon>Embryophyta</taxon>
        <taxon>Tracheophyta</taxon>
        <taxon>Spermatophyta</taxon>
        <taxon>Magnoliopsida</taxon>
        <taxon>Liliopsida</taxon>
        <taxon>Poales</taxon>
        <taxon>Poaceae</taxon>
        <taxon>PACMAD clade</taxon>
        <taxon>Panicoideae</taxon>
        <taxon>Andropogonodae</taxon>
        <taxon>Andropogoneae</taxon>
        <taxon>Tripsacinae</taxon>
        <taxon>Zea</taxon>
    </lineage>
</organism>
<accession>P31726</accession>
<name>CYT1_MAIZE</name>
<feature type="signal peptide" evidence="2">
    <location>
        <begin position="1"/>
        <end position="24"/>
    </location>
</feature>
<feature type="chain" id="PRO_0000006668" description="Cystatin-1">
    <location>
        <begin position="25"/>
        <end position="135"/>
    </location>
</feature>
<feature type="short sequence motif" description="Secondary area of contact" evidence="1">
    <location>
        <begin position="86"/>
        <end position="90"/>
    </location>
</feature>
<feature type="site" description="Reactive site" evidence="1">
    <location>
        <position position="42"/>
    </location>
</feature>
<feature type="sequence conflict" description="In Ref. 2; AAA18557." evidence="3" ref="2">
    <original>K</original>
    <variation>N</variation>
    <location>
        <position position="105"/>
    </location>
</feature>
<keyword id="KW-0646">Protease inhibitor</keyword>
<keyword id="KW-1185">Reference proteome</keyword>
<keyword id="KW-0732">Signal</keyword>
<keyword id="KW-0789">Thiol protease inhibitor</keyword>
<sequence>MRKHRIVSLVAALLVLLALAAVSSTRSTQKESVADNAGMLAGGIKDVPANENDLQLQELARFAVNEHNQKANALLGFEKLVKAKTQVVAGTMYYLTIEVKDGEVKKLYEAKVWEKPWENFKQLQEFKPVEEGASA</sequence>
<dbReference type="EMBL" id="D10622">
    <property type="protein sequence ID" value="BAA01472.1"/>
    <property type="molecule type" value="mRNA"/>
</dbReference>
<dbReference type="EMBL" id="M95070">
    <property type="protein sequence ID" value="AAA18557.1"/>
    <property type="molecule type" value="mRNA"/>
</dbReference>
<dbReference type="PIR" id="S27239">
    <property type="entry name" value="S27239"/>
</dbReference>
<dbReference type="RefSeq" id="NP_001105295.1">
    <property type="nucleotide sequence ID" value="NM_001111825.1"/>
</dbReference>
<dbReference type="SMR" id="P31726"/>
<dbReference type="FunCoup" id="P31726">
    <property type="interactions" value="153"/>
</dbReference>
<dbReference type="STRING" id="4577.P31726"/>
<dbReference type="MEROPS" id="I25.052"/>
<dbReference type="PaxDb" id="4577-GRMZM2G438551_P01"/>
<dbReference type="GeneID" id="542213"/>
<dbReference type="KEGG" id="zma:542213"/>
<dbReference type="MaizeGDB" id="25463"/>
<dbReference type="MaizeGDB" id="30117"/>
<dbReference type="eggNOG" id="ENOG502SC50">
    <property type="taxonomic scope" value="Eukaryota"/>
</dbReference>
<dbReference type="InParanoid" id="P31726"/>
<dbReference type="OrthoDB" id="1908104at2759"/>
<dbReference type="Proteomes" id="UP000007305">
    <property type="component" value="Unplaced"/>
</dbReference>
<dbReference type="ExpressionAtlas" id="P31726">
    <property type="expression patterns" value="baseline and differential"/>
</dbReference>
<dbReference type="GO" id="GO:0004869">
    <property type="term" value="F:cysteine-type endopeptidase inhibitor activity"/>
    <property type="evidence" value="ECO:0000318"/>
    <property type="project" value="GO_Central"/>
</dbReference>
<dbReference type="CDD" id="cd00042">
    <property type="entry name" value="CY"/>
    <property type="match status" value="1"/>
</dbReference>
<dbReference type="FunFam" id="3.10.450.10:FF:000025">
    <property type="entry name" value="Cysteine proteinase inhibitor"/>
    <property type="match status" value="1"/>
</dbReference>
<dbReference type="Gene3D" id="3.10.450.10">
    <property type="match status" value="1"/>
</dbReference>
<dbReference type="InterPro" id="IPR027214">
    <property type="entry name" value="Cystatin"/>
</dbReference>
<dbReference type="InterPro" id="IPR000010">
    <property type="entry name" value="Cystatin_dom"/>
</dbReference>
<dbReference type="InterPro" id="IPR046350">
    <property type="entry name" value="Cystatin_sf"/>
</dbReference>
<dbReference type="InterPro" id="IPR018073">
    <property type="entry name" value="Prot_inh_cystat_CS"/>
</dbReference>
<dbReference type="PANTHER" id="PTHR11413">
    <property type="entry name" value="CYSTATIN FAMILY MEMBER"/>
    <property type="match status" value="1"/>
</dbReference>
<dbReference type="PANTHER" id="PTHR11413:SF110">
    <property type="entry name" value="CYSTEINE PROTEINASE INHIBITOR 6"/>
    <property type="match status" value="1"/>
</dbReference>
<dbReference type="Pfam" id="PF16845">
    <property type="entry name" value="SQAPI"/>
    <property type="match status" value="1"/>
</dbReference>
<dbReference type="SMART" id="SM00043">
    <property type="entry name" value="CY"/>
    <property type="match status" value="1"/>
</dbReference>
<dbReference type="SUPFAM" id="SSF54403">
    <property type="entry name" value="Cystatin/monellin"/>
    <property type="match status" value="1"/>
</dbReference>
<dbReference type="PROSITE" id="PS00287">
    <property type="entry name" value="CYSTATIN"/>
    <property type="match status" value="1"/>
</dbReference>
<proteinExistence type="evidence at transcript level"/>
<evidence type="ECO:0000250" key="1"/>
<evidence type="ECO:0000255" key="2"/>
<evidence type="ECO:0000305" key="3"/>
<protein>
    <recommendedName>
        <fullName>Cystatin-1</fullName>
    </recommendedName>
    <alternativeName>
        <fullName>Corn kernel cysteine proteinase inhibitor</fullName>
    </alternativeName>
    <alternativeName>
        <fullName>Cystatin I</fullName>
    </alternativeName>
</protein>